<feature type="chain" id="PRO_1000196096" description="Large ribosomal subunit protein bL34">
    <location>
        <begin position="1"/>
        <end position="47"/>
    </location>
</feature>
<accession>C1B7S6</accession>
<name>RL34_RHOOB</name>
<protein>
    <recommendedName>
        <fullName evidence="1">Large ribosomal subunit protein bL34</fullName>
    </recommendedName>
    <alternativeName>
        <fullName evidence="2">50S ribosomal protein L34</fullName>
    </alternativeName>
</protein>
<organism>
    <name type="scientific">Rhodococcus opacus (strain B4)</name>
    <dbReference type="NCBI Taxonomy" id="632772"/>
    <lineage>
        <taxon>Bacteria</taxon>
        <taxon>Bacillati</taxon>
        <taxon>Actinomycetota</taxon>
        <taxon>Actinomycetes</taxon>
        <taxon>Mycobacteriales</taxon>
        <taxon>Nocardiaceae</taxon>
        <taxon>Rhodococcus</taxon>
    </lineage>
</organism>
<gene>
    <name evidence="1" type="primary">rpmH</name>
    <name type="ordered locus">ROP_34820</name>
</gene>
<comment type="similarity">
    <text evidence="1">Belongs to the bacterial ribosomal protein bL34 family.</text>
</comment>
<reference key="1">
    <citation type="submission" date="2009-03" db="EMBL/GenBank/DDBJ databases">
        <title>Comparison of the complete genome sequences of Rhodococcus erythropolis PR4 and Rhodococcus opacus B4.</title>
        <authorList>
            <person name="Takarada H."/>
            <person name="Sekine M."/>
            <person name="Hosoyama A."/>
            <person name="Yamada R."/>
            <person name="Fujisawa T."/>
            <person name="Omata S."/>
            <person name="Shimizu A."/>
            <person name="Tsukatani N."/>
            <person name="Tanikawa S."/>
            <person name="Fujita N."/>
            <person name="Harayama S."/>
        </authorList>
    </citation>
    <scope>NUCLEOTIDE SEQUENCE [LARGE SCALE GENOMIC DNA]</scope>
    <source>
        <strain>B4</strain>
    </source>
</reference>
<keyword id="KW-0687">Ribonucleoprotein</keyword>
<keyword id="KW-0689">Ribosomal protein</keyword>
<sequence length="47" mass="5536">MAKGKRTFQPNNRRRARVHGFRLRMRTRAGRAIVSARRRKGRESLTA</sequence>
<dbReference type="EMBL" id="AP011115">
    <property type="protein sequence ID" value="BAH51729.1"/>
    <property type="molecule type" value="Genomic_DNA"/>
</dbReference>
<dbReference type="RefSeq" id="WP_005263481.1">
    <property type="nucleotide sequence ID" value="NC_012522.1"/>
</dbReference>
<dbReference type="SMR" id="C1B7S6"/>
<dbReference type="STRING" id="632772.ROP_34820"/>
<dbReference type="GeneID" id="69895475"/>
<dbReference type="KEGG" id="rop:ROP_34820"/>
<dbReference type="PATRIC" id="fig|632772.20.peg.3647"/>
<dbReference type="HOGENOM" id="CLU_129938_2_1_11"/>
<dbReference type="OrthoDB" id="9804832at2"/>
<dbReference type="Proteomes" id="UP000002212">
    <property type="component" value="Chromosome"/>
</dbReference>
<dbReference type="GO" id="GO:1990904">
    <property type="term" value="C:ribonucleoprotein complex"/>
    <property type="evidence" value="ECO:0007669"/>
    <property type="project" value="UniProtKB-KW"/>
</dbReference>
<dbReference type="GO" id="GO:0005840">
    <property type="term" value="C:ribosome"/>
    <property type="evidence" value="ECO:0007669"/>
    <property type="project" value="UniProtKB-KW"/>
</dbReference>
<dbReference type="GO" id="GO:0003735">
    <property type="term" value="F:structural constituent of ribosome"/>
    <property type="evidence" value="ECO:0007669"/>
    <property type="project" value="InterPro"/>
</dbReference>
<dbReference type="GO" id="GO:0006412">
    <property type="term" value="P:translation"/>
    <property type="evidence" value="ECO:0007669"/>
    <property type="project" value="UniProtKB-UniRule"/>
</dbReference>
<dbReference type="FunFam" id="1.10.287.3980:FF:000001">
    <property type="entry name" value="Mitochondrial ribosomal protein L34"/>
    <property type="match status" value="1"/>
</dbReference>
<dbReference type="Gene3D" id="1.10.287.3980">
    <property type="match status" value="1"/>
</dbReference>
<dbReference type="HAMAP" id="MF_00391">
    <property type="entry name" value="Ribosomal_bL34"/>
    <property type="match status" value="1"/>
</dbReference>
<dbReference type="InterPro" id="IPR000271">
    <property type="entry name" value="Ribosomal_bL34"/>
</dbReference>
<dbReference type="InterPro" id="IPR020939">
    <property type="entry name" value="Ribosomal_bL34_CS"/>
</dbReference>
<dbReference type="NCBIfam" id="TIGR01030">
    <property type="entry name" value="rpmH_bact"/>
    <property type="match status" value="1"/>
</dbReference>
<dbReference type="PANTHER" id="PTHR14503:SF4">
    <property type="entry name" value="LARGE RIBOSOMAL SUBUNIT PROTEIN BL34M"/>
    <property type="match status" value="1"/>
</dbReference>
<dbReference type="PANTHER" id="PTHR14503">
    <property type="entry name" value="MITOCHONDRIAL RIBOSOMAL PROTEIN 34 FAMILY MEMBER"/>
    <property type="match status" value="1"/>
</dbReference>
<dbReference type="Pfam" id="PF00468">
    <property type="entry name" value="Ribosomal_L34"/>
    <property type="match status" value="1"/>
</dbReference>
<dbReference type="PROSITE" id="PS00784">
    <property type="entry name" value="RIBOSOMAL_L34"/>
    <property type="match status" value="1"/>
</dbReference>
<proteinExistence type="inferred from homology"/>
<evidence type="ECO:0000255" key="1">
    <source>
        <dbReference type="HAMAP-Rule" id="MF_00391"/>
    </source>
</evidence>
<evidence type="ECO:0000305" key="2"/>